<organism>
    <name type="scientific">Bos taurus</name>
    <name type="common">Bovine</name>
    <dbReference type="NCBI Taxonomy" id="9913"/>
    <lineage>
        <taxon>Eukaryota</taxon>
        <taxon>Metazoa</taxon>
        <taxon>Chordata</taxon>
        <taxon>Craniata</taxon>
        <taxon>Vertebrata</taxon>
        <taxon>Euteleostomi</taxon>
        <taxon>Mammalia</taxon>
        <taxon>Eutheria</taxon>
        <taxon>Laurasiatheria</taxon>
        <taxon>Artiodactyla</taxon>
        <taxon>Ruminantia</taxon>
        <taxon>Pecora</taxon>
        <taxon>Bovidae</taxon>
        <taxon>Bovinae</taxon>
        <taxon>Bos</taxon>
    </lineage>
</organism>
<accession>Q1JQB2</accession>
<accession>A5D9G0</accession>
<evidence type="ECO:0000250" key="1"/>
<evidence type="ECO:0000250" key="2">
    <source>
        <dbReference type="UniProtKB" id="O43684"/>
    </source>
</evidence>
<evidence type="ECO:0000250" key="3">
    <source>
        <dbReference type="UniProtKB" id="Q9WVA3"/>
    </source>
</evidence>
<evidence type="ECO:0000305" key="4"/>
<keyword id="KW-0007">Acetylation</keyword>
<keyword id="KW-0013">ADP-ribosylation</keyword>
<keyword id="KW-0131">Cell cycle</keyword>
<keyword id="KW-0132">Cell division</keyword>
<keyword id="KW-0137">Centromere</keyword>
<keyword id="KW-0158">Chromosome</keyword>
<keyword id="KW-0159">Chromosome partition</keyword>
<keyword id="KW-1017">Isopeptide bond</keyword>
<keyword id="KW-0995">Kinetochore</keyword>
<keyword id="KW-0469">Meiosis</keyword>
<keyword id="KW-0498">Mitosis</keyword>
<keyword id="KW-0539">Nucleus</keyword>
<keyword id="KW-0597">Phosphoprotein</keyword>
<keyword id="KW-1185">Reference proteome</keyword>
<keyword id="KW-0677">Repeat</keyword>
<keyword id="KW-0832">Ubl conjugation</keyword>
<keyword id="KW-0853">WD repeat</keyword>
<reference key="1">
    <citation type="journal article" date="2005" name="BMC Genomics">
        <title>Characterization of 954 bovine full-CDS cDNA sequences.</title>
        <authorList>
            <person name="Harhay G.P."/>
            <person name="Sonstegard T.S."/>
            <person name="Keele J.W."/>
            <person name="Heaton M.P."/>
            <person name="Clawson M.L."/>
            <person name="Snelling W.M."/>
            <person name="Wiedmann R.T."/>
            <person name="Van Tassell C.P."/>
            <person name="Smith T.P.L."/>
        </authorList>
    </citation>
    <scope>NUCLEOTIDE SEQUENCE [LARGE SCALE MRNA]</scope>
</reference>
<reference key="2">
    <citation type="submission" date="2006-05" db="EMBL/GenBank/DDBJ databases">
        <authorList>
            <consortium name="NIH - Mammalian Gene Collection (MGC) project"/>
        </authorList>
    </citation>
    <scope>NUCLEOTIDE SEQUENCE [LARGE SCALE MRNA]</scope>
    <source>
        <strain>Hereford</strain>
        <tissue>Ascending colon</tissue>
    </source>
</reference>
<feature type="chain" id="PRO_0000254025" description="Mitotic checkpoint protein BUB3">
    <location>
        <begin position="1"/>
        <end position="326"/>
    </location>
</feature>
<feature type="repeat" description="WD 1">
    <location>
        <begin position="5"/>
        <end position="43"/>
    </location>
</feature>
<feature type="repeat" description="WD 2">
    <location>
        <begin position="46"/>
        <end position="83"/>
    </location>
</feature>
<feature type="repeat" description="WD 3">
    <location>
        <begin position="86"/>
        <end position="124"/>
    </location>
</feature>
<feature type="repeat" description="WD 4">
    <location>
        <begin position="128"/>
        <end position="163"/>
    </location>
</feature>
<feature type="repeat" description="WD 5">
    <location>
        <begin position="223"/>
        <end position="262"/>
    </location>
</feature>
<feature type="modified residue" description="N6-acetyllysine" evidence="2">
    <location>
        <position position="179"/>
    </location>
</feature>
<feature type="modified residue" description="Phosphoserine" evidence="2">
    <location>
        <position position="211"/>
    </location>
</feature>
<feature type="cross-link" description="Glycyl lysine isopeptide (Lys-Gly) (interchain with G-Cter in ubiquitin)" evidence="2">
    <location>
        <position position="216"/>
    </location>
</feature>
<protein>
    <recommendedName>
        <fullName>Mitotic checkpoint protein BUB3</fullName>
    </recommendedName>
</protein>
<comment type="function">
    <text evidence="1">Has a dual function in spindle-assembly checkpoint signaling and in promoting the establishment of correct kinetochore-microtubule (K-MT) attachments. Promotes the formation of stable end-on bipolar attachments. Necessary for kinetochore localization of BUB1. Regulates chromosome segregation during oocyte meiosis. The BUB1/BUB3 complex plays a role in the inhibition of anaphase-promoting complex or cyclosome (APC/C) when spindle-assembly checkpoint is activated and inhibits the ubiquitin ligase activity of APC/C by phosphorylating its activator CDC20. This complex can also phosphorylate MAD1L1 (By similarity).</text>
</comment>
<comment type="subunit">
    <text evidence="1">Interacts with BUB1 and BUBR1. The BUB1/BUB3 complex interacts with MAD1L1. Interacts with ZNF207/BuGZ; leading to promote stability and kinetochore loading of BUB3 (By similarity).</text>
</comment>
<comment type="subcellular location">
    <subcellularLocation>
        <location evidence="1">Nucleus</location>
    </subcellularLocation>
    <subcellularLocation>
        <location evidence="1">Chromosome</location>
        <location evidence="1">Centromere</location>
        <location evidence="1">Kinetochore</location>
    </subcellularLocation>
    <text evidence="1">Starts to localize at kinetochores in prometaphase I (Pro-MI) stage and maintains the localization until the metaphase I-anaphase I (MI-AI) transition.</text>
</comment>
<comment type="PTM">
    <text evidence="3">Poly-ADP-ribosylated by PARP1.</text>
</comment>
<comment type="PTM">
    <text evidence="2">Ubiquitinated by UBR5, promoting disassembly of the mitotic checkpoint complex from the APC/C complex.</text>
</comment>
<comment type="similarity">
    <text evidence="4">Belongs to the WD repeat BUB3 family.</text>
</comment>
<gene>
    <name type="primary">BUB3</name>
</gene>
<dbReference type="EMBL" id="BT030579">
    <property type="protein sequence ID" value="ABQ13019.1"/>
    <property type="molecule type" value="mRNA"/>
</dbReference>
<dbReference type="EMBL" id="BC116090">
    <property type="protein sequence ID" value="AAI16091.1"/>
    <property type="molecule type" value="mRNA"/>
</dbReference>
<dbReference type="RefSeq" id="NP_001069645.1">
    <property type="nucleotide sequence ID" value="NM_001076177.1"/>
</dbReference>
<dbReference type="SMR" id="Q1JQB2"/>
<dbReference type="FunCoup" id="Q1JQB2">
    <property type="interactions" value="4112"/>
</dbReference>
<dbReference type="STRING" id="9913.ENSBTAP00000051164"/>
<dbReference type="PaxDb" id="9913-ENSBTAP00000051164"/>
<dbReference type="PeptideAtlas" id="Q1JQB2"/>
<dbReference type="Ensembl" id="ENSBTAT00000057027.4">
    <property type="protein sequence ID" value="ENSBTAP00000051164.2"/>
    <property type="gene ID" value="ENSBTAG00000017913.7"/>
</dbReference>
<dbReference type="GeneID" id="539594"/>
<dbReference type="KEGG" id="bta:539594"/>
<dbReference type="CTD" id="9184"/>
<dbReference type="VEuPathDB" id="HostDB:ENSBTAG00000017913"/>
<dbReference type="VGNC" id="VGNC:26606">
    <property type="gene designation" value="BUB3"/>
</dbReference>
<dbReference type="eggNOG" id="KOG1036">
    <property type="taxonomic scope" value="Eukaryota"/>
</dbReference>
<dbReference type="GeneTree" id="ENSGT00950000183091"/>
<dbReference type="HOGENOM" id="CLU_038526_0_0_1"/>
<dbReference type="InParanoid" id="Q1JQB2"/>
<dbReference type="OMA" id="WDSTLHI"/>
<dbReference type="OrthoDB" id="10262475at2759"/>
<dbReference type="TreeFam" id="TF105454"/>
<dbReference type="Reactome" id="R-BTA-141430">
    <property type="pathway name" value="Inactivation of APC/C via direct inhibition of the APC/C complex"/>
</dbReference>
<dbReference type="Reactome" id="R-BTA-141444">
    <property type="pathway name" value="Amplification of signal from unattached kinetochores via a MAD2 inhibitory signal"/>
</dbReference>
<dbReference type="Reactome" id="R-BTA-174184">
    <property type="pathway name" value="Cdc20:Phospho-APC/C mediated degradation of Cyclin A"/>
</dbReference>
<dbReference type="Reactome" id="R-BTA-176409">
    <property type="pathway name" value="APC/C:Cdc20 mediated degradation of mitotic proteins"/>
</dbReference>
<dbReference type="Reactome" id="R-BTA-179409">
    <property type="pathway name" value="APC-Cdc20 mediated degradation of Nek2A"/>
</dbReference>
<dbReference type="Reactome" id="R-BTA-2467813">
    <property type="pathway name" value="Separation of Sister Chromatids"/>
</dbReference>
<dbReference type="Reactome" id="R-BTA-2500257">
    <property type="pathway name" value="Resolution of Sister Chromatid Cohesion"/>
</dbReference>
<dbReference type="Reactome" id="R-BTA-5663220">
    <property type="pathway name" value="RHO GTPases Activate Formins"/>
</dbReference>
<dbReference type="Reactome" id="R-BTA-68877">
    <property type="pathway name" value="Mitotic Prometaphase"/>
</dbReference>
<dbReference type="Reactome" id="R-BTA-9648025">
    <property type="pathway name" value="EML4 and NUDC in mitotic spindle formation"/>
</dbReference>
<dbReference type="Proteomes" id="UP000009136">
    <property type="component" value="Chromosome 26"/>
</dbReference>
<dbReference type="Bgee" id="ENSBTAG00000017913">
    <property type="expression patterns" value="Expressed in oocyte and 107 other cell types or tissues"/>
</dbReference>
<dbReference type="GO" id="GO:1990298">
    <property type="term" value="C:bub1-bub3 complex"/>
    <property type="evidence" value="ECO:0000318"/>
    <property type="project" value="GO_Central"/>
</dbReference>
<dbReference type="GO" id="GO:0000776">
    <property type="term" value="C:kinetochore"/>
    <property type="evidence" value="ECO:0000250"/>
    <property type="project" value="UniProtKB"/>
</dbReference>
<dbReference type="GO" id="GO:0033597">
    <property type="term" value="C:mitotic checkpoint complex"/>
    <property type="evidence" value="ECO:0000318"/>
    <property type="project" value="GO_Central"/>
</dbReference>
<dbReference type="GO" id="GO:0005654">
    <property type="term" value="C:nucleoplasm"/>
    <property type="evidence" value="ECO:0000318"/>
    <property type="project" value="GO_Central"/>
</dbReference>
<dbReference type="GO" id="GO:0043130">
    <property type="term" value="F:ubiquitin binding"/>
    <property type="evidence" value="ECO:0000318"/>
    <property type="project" value="GO_Central"/>
</dbReference>
<dbReference type="GO" id="GO:0051301">
    <property type="term" value="P:cell division"/>
    <property type="evidence" value="ECO:0007669"/>
    <property type="project" value="UniProtKB-KW"/>
</dbReference>
<dbReference type="GO" id="GO:0007059">
    <property type="term" value="P:chromosome segregation"/>
    <property type="evidence" value="ECO:0007669"/>
    <property type="project" value="UniProtKB-KW"/>
</dbReference>
<dbReference type="GO" id="GO:0051321">
    <property type="term" value="P:meiotic cell cycle"/>
    <property type="evidence" value="ECO:0007669"/>
    <property type="project" value="UniProtKB-KW"/>
</dbReference>
<dbReference type="GO" id="GO:0007094">
    <property type="term" value="P:mitotic spindle assembly checkpoint signaling"/>
    <property type="evidence" value="ECO:0000318"/>
    <property type="project" value="GO_Central"/>
</dbReference>
<dbReference type="GO" id="GO:0051983">
    <property type="term" value="P:regulation of chromosome segregation"/>
    <property type="evidence" value="ECO:0000250"/>
    <property type="project" value="UniProtKB"/>
</dbReference>
<dbReference type="FunFam" id="2.130.10.10:FF:000047">
    <property type="entry name" value="Mitotic checkpoint protein bub3, putative"/>
    <property type="match status" value="1"/>
</dbReference>
<dbReference type="Gene3D" id="2.130.10.10">
    <property type="entry name" value="YVTN repeat-like/Quinoprotein amine dehydrogenase"/>
    <property type="match status" value="1"/>
</dbReference>
<dbReference type="InterPro" id="IPR020472">
    <property type="entry name" value="G-protein_beta_WD-40_rep"/>
</dbReference>
<dbReference type="InterPro" id="IPR015943">
    <property type="entry name" value="WD40/YVTN_repeat-like_dom_sf"/>
</dbReference>
<dbReference type="InterPro" id="IPR036322">
    <property type="entry name" value="WD40_repeat_dom_sf"/>
</dbReference>
<dbReference type="InterPro" id="IPR001680">
    <property type="entry name" value="WD40_rpt"/>
</dbReference>
<dbReference type="PANTHER" id="PTHR10971">
    <property type="entry name" value="MRNA EXPORT FACTOR AND BUB3"/>
    <property type="match status" value="1"/>
</dbReference>
<dbReference type="Pfam" id="PF00400">
    <property type="entry name" value="WD40"/>
    <property type="match status" value="3"/>
</dbReference>
<dbReference type="PRINTS" id="PR00320">
    <property type="entry name" value="GPROTEINBRPT"/>
</dbReference>
<dbReference type="SMART" id="SM00320">
    <property type="entry name" value="WD40"/>
    <property type="match status" value="6"/>
</dbReference>
<dbReference type="SUPFAM" id="SSF50978">
    <property type="entry name" value="WD40 repeat-like"/>
    <property type="match status" value="1"/>
</dbReference>
<dbReference type="PROSITE" id="PS50082">
    <property type="entry name" value="WD_REPEATS_2"/>
    <property type="match status" value="2"/>
</dbReference>
<dbReference type="PROSITE" id="PS50294">
    <property type="entry name" value="WD_REPEATS_REGION"/>
    <property type="match status" value="1"/>
</dbReference>
<proteinExistence type="evidence at transcript level"/>
<sequence>MTGSNEFKLNQPPEDGISSVKFSPNTSQFLLVSSWDTSVRLYDVPANSMRLKYQHTGAVLDCAFYDPTHAWSGGLDHQLKMHDLNTDQENLVGTHDAPIRCVEYCPEVNVMVTGSWDQTVKLWDPRTPCNAGTFSQPEKVYTLSVSGDRLIVGTAGRRVLVWDLRNMGYVQQRRESSLKYQTRCIRAFPNKQGYVLSSIEGRVAVEYLDPSPEVQKKKYAFKCHRLKENNIEQIYPVNAISFHNIHNTFATGGSDGFVNIWDPFNKKRLCQFHRYPTSIASLAFSNDGTTLAIASSYMYEMDDTEHPEDGIFIRQVTDAETKPKST</sequence>
<name>BUB3_BOVIN</name>